<feature type="peptide" id="PRO_0000044797" description="Pancreatic polypeptide">
    <location>
        <begin position="1"/>
        <end position="36"/>
    </location>
</feature>
<feature type="modified residue" description="Tyrosine amide" evidence="2">
    <location>
        <position position="36"/>
    </location>
</feature>
<comment type="function">
    <text evidence="1">Hormone secreted by pancreatic cells that acts as a regulator of pancreatic and gastrointestinal functions probably by signaling through the G protein-coupled receptor NPY4R2.</text>
</comment>
<comment type="subcellular location">
    <subcellularLocation>
        <location evidence="1">Secreted</location>
    </subcellularLocation>
</comment>
<comment type="similarity">
    <text evidence="4">Belongs to the NPY family.</text>
</comment>
<organism>
    <name type="scientific">Equus przewalskii</name>
    <name type="common">Przewalski's horse</name>
    <name type="synonym">Equus caballus przewalskii</name>
    <dbReference type="NCBI Taxonomy" id="9798"/>
    <lineage>
        <taxon>Eukaryota</taxon>
        <taxon>Metazoa</taxon>
        <taxon>Chordata</taxon>
        <taxon>Craniata</taxon>
        <taxon>Vertebrata</taxon>
        <taxon>Euteleostomi</taxon>
        <taxon>Mammalia</taxon>
        <taxon>Eutheria</taxon>
        <taxon>Laurasiatheria</taxon>
        <taxon>Perissodactyla</taxon>
        <taxon>Equidae</taxon>
        <taxon>Equus</taxon>
    </lineage>
</organism>
<reference key="1">
    <citation type="journal article" date="1991" name="Gen. Comp. Endocrinol.">
        <title>Primary structure of pancreatic polypeptide from four species of Perissodactyla (Przewalski's horse, zebra, rhino, tapir).</title>
        <authorList>
            <person name="Henry J.S."/>
            <person name="Lance V.A."/>
            <person name="Conlon J.M."/>
        </authorList>
    </citation>
    <scope>PROTEIN SEQUENCE</scope>
    <scope>AMIDATION AT TYR-36</scope>
    <source>
        <tissue>Pancreas</tissue>
    </source>
</reference>
<proteinExistence type="evidence at protein level"/>
<keyword id="KW-0027">Amidation</keyword>
<keyword id="KW-0903">Direct protein sequencing</keyword>
<keyword id="KW-0372">Hormone</keyword>
<keyword id="KW-0964">Secreted</keyword>
<gene>
    <name type="primary">PPY</name>
</gene>
<dbReference type="PIR" id="D61132">
    <property type="entry name" value="D61132"/>
</dbReference>
<dbReference type="SMR" id="P68010"/>
<dbReference type="Proteomes" id="UP000694949">
    <property type="component" value="Unplaced"/>
</dbReference>
<dbReference type="GO" id="GO:0005615">
    <property type="term" value="C:extracellular space"/>
    <property type="evidence" value="ECO:0007669"/>
    <property type="project" value="TreeGrafter"/>
</dbReference>
<dbReference type="GO" id="GO:0005184">
    <property type="term" value="F:neuropeptide hormone activity"/>
    <property type="evidence" value="ECO:0007669"/>
    <property type="project" value="TreeGrafter"/>
</dbReference>
<dbReference type="GO" id="GO:0031841">
    <property type="term" value="F:neuropeptide Y receptor binding"/>
    <property type="evidence" value="ECO:0007669"/>
    <property type="project" value="TreeGrafter"/>
</dbReference>
<dbReference type="GO" id="GO:0007631">
    <property type="term" value="P:feeding behavior"/>
    <property type="evidence" value="ECO:0007669"/>
    <property type="project" value="TreeGrafter"/>
</dbReference>
<dbReference type="GO" id="GO:0007218">
    <property type="term" value="P:neuropeptide signaling pathway"/>
    <property type="evidence" value="ECO:0007669"/>
    <property type="project" value="TreeGrafter"/>
</dbReference>
<dbReference type="CDD" id="cd00126">
    <property type="entry name" value="PAH"/>
    <property type="match status" value="1"/>
</dbReference>
<dbReference type="Gene3D" id="6.10.250.900">
    <property type="match status" value="1"/>
</dbReference>
<dbReference type="InterPro" id="IPR001955">
    <property type="entry name" value="Pancreatic_hormone-like"/>
</dbReference>
<dbReference type="InterPro" id="IPR020392">
    <property type="entry name" value="Pancreatic_hormone-like_CS"/>
</dbReference>
<dbReference type="PANTHER" id="PTHR10533">
    <property type="entry name" value="NEUROPEPTIDE Y/PANCREATIC HORMONE/PEPTIDE YY"/>
    <property type="match status" value="1"/>
</dbReference>
<dbReference type="PANTHER" id="PTHR10533:SF2">
    <property type="entry name" value="PANCREATIC POLYPEPTIDE PROHORMONE"/>
    <property type="match status" value="1"/>
</dbReference>
<dbReference type="Pfam" id="PF00159">
    <property type="entry name" value="Hormone_3"/>
    <property type="match status" value="1"/>
</dbReference>
<dbReference type="PRINTS" id="PR00278">
    <property type="entry name" value="PANCHORMONE"/>
</dbReference>
<dbReference type="SMART" id="SM00309">
    <property type="entry name" value="PAH"/>
    <property type="match status" value="1"/>
</dbReference>
<dbReference type="PROSITE" id="PS00265">
    <property type="entry name" value="PANCREATIC_HORMONE_1"/>
    <property type="match status" value="1"/>
</dbReference>
<dbReference type="PROSITE" id="PS50276">
    <property type="entry name" value="PANCREATIC_HORMONE_2"/>
    <property type="match status" value="1"/>
</dbReference>
<sequence length="36" mass="4215">APMEPVYPGDNATPEQMAQYAAELRRYINMLTRPRY</sequence>
<protein>
    <recommendedName>
        <fullName evidence="3">Pancreatic polypeptide</fullName>
        <shortName evidence="3">PP</shortName>
    </recommendedName>
</protein>
<accession>P68010</accession>
<accession>P38000</accession>
<name>PAHO_EQUPR</name>
<evidence type="ECO:0000250" key="1">
    <source>
        <dbReference type="UniProtKB" id="P01298"/>
    </source>
</evidence>
<evidence type="ECO:0000269" key="2">
    <source>
    </source>
</evidence>
<evidence type="ECO:0000303" key="3">
    <source>
    </source>
</evidence>
<evidence type="ECO:0000305" key="4"/>